<comment type="function">
    <text evidence="1">The natural substrate for this enzyme may be peptidyl-tRNAs which drop off the ribosome during protein synthesis.</text>
</comment>
<comment type="catalytic activity">
    <reaction>
        <text>an N-acyl-L-alpha-aminoacyl-tRNA + H2O = an N-acyl-L-amino acid + a tRNA + H(+)</text>
        <dbReference type="Rhea" id="RHEA:54448"/>
        <dbReference type="Rhea" id="RHEA-COMP:10123"/>
        <dbReference type="Rhea" id="RHEA-COMP:13883"/>
        <dbReference type="ChEBI" id="CHEBI:15377"/>
        <dbReference type="ChEBI" id="CHEBI:15378"/>
        <dbReference type="ChEBI" id="CHEBI:59874"/>
        <dbReference type="ChEBI" id="CHEBI:78442"/>
        <dbReference type="ChEBI" id="CHEBI:138191"/>
        <dbReference type="EC" id="3.1.1.29"/>
    </reaction>
</comment>
<comment type="subcellular location">
    <subcellularLocation>
        <location evidence="1">Cytoplasm</location>
    </subcellularLocation>
</comment>
<comment type="similarity">
    <text evidence="3">Belongs to the PTH2 family.</text>
</comment>
<protein>
    <recommendedName>
        <fullName>Peptidyl-tRNA hydrolase</fullName>
        <shortName>PTH</shortName>
        <ecNumber>3.1.1.29</ecNumber>
    </recommendedName>
</protein>
<dbReference type="EC" id="3.1.1.29"/>
<dbReference type="EMBL" id="AE004437">
    <property type="status" value="NOT_ANNOTATED_CDS"/>
    <property type="molecule type" value="Genomic_DNA"/>
</dbReference>
<dbReference type="SMR" id="P61414"/>
<dbReference type="FunCoup" id="P61414">
    <property type="interactions" value="138"/>
</dbReference>
<dbReference type="InParanoid" id="P61414"/>
<dbReference type="OrthoDB" id="6075at2157"/>
<dbReference type="PhylomeDB" id="P61414"/>
<dbReference type="Proteomes" id="UP000000554">
    <property type="component" value="Chromosome"/>
</dbReference>
<dbReference type="GO" id="GO:0005829">
    <property type="term" value="C:cytosol"/>
    <property type="evidence" value="ECO:0000318"/>
    <property type="project" value="GO_Central"/>
</dbReference>
<dbReference type="GO" id="GO:0004045">
    <property type="term" value="F:peptidyl-tRNA hydrolase activity"/>
    <property type="evidence" value="ECO:0000318"/>
    <property type="project" value="GO_Central"/>
</dbReference>
<dbReference type="GO" id="GO:0006412">
    <property type="term" value="P:translation"/>
    <property type="evidence" value="ECO:0007669"/>
    <property type="project" value="UniProtKB-UniRule"/>
</dbReference>
<dbReference type="CDD" id="cd02430">
    <property type="entry name" value="PTH2"/>
    <property type="match status" value="1"/>
</dbReference>
<dbReference type="FunFam" id="3.40.1490.10:FF:000001">
    <property type="entry name" value="Peptidyl-tRNA hydrolase 2"/>
    <property type="match status" value="1"/>
</dbReference>
<dbReference type="Gene3D" id="3.40.1490.10">
    <property type="entry name" value="Bit1"/>
    <property type="match status" value="1"/>
</dbReference>
<dbReference type="HAMAP" id="MF_00628">
    <property type="entry name" value="Pept_tRNA_hydro_arch"/>
    <property type="match status" value="1"/>
</dbReference>
<dbReference type="InterPro" id="IPR023476">
    <property type="entry name" value="Pep_tRNA_hydro_II_dom_sf"/>
</dbReference>
<dbReference type="InterPro" id="IPR034759">
    <property type="entry name" value="Pept_tRNA_hydro_arch"/>
</dbReference>
<dbReference type="InterPro" id="IPR002833">
    <property type="entry name" value="PTH2"/>
</dbReference>
<dbReference type="NCBIfam" id="TIGR00283">
    <property type="entry name" value="arch_pth2"/>
    <property type="match status" value="1"/>
</dbReference>
<dbReference type="NCBIfam" id="NF003314">
    <property type="entry name" value="PRK04322.1"/>
    <property type="match status" value="1"/>
</dbReference>
<dbReference type="PANTHER" id="PTHR12649">
    <property type="entry name" value="PEPTIDYL-TRNA HYDROLASE 2"/>
    <property type="match status" value="1"/>
</dbReference>
<dbReference type="PANTHER" id="PTHR12649:SF11">
    <property type="entry name" value="PEPTIDYL-TRNA HYDROLASE 2, MITOCHONDRIAL"/>
    <property type="match status" value="1"/>
</dbReference>
<dbReference type="Pfam" id="PF01981">
    <property type="entry name" value="PTH2"/>
    <property type="match status" value="1"/>
</dbReference>
<dbReference type="SUPFAM" id="SSF102462">
    <property type="entry name" value="Peptidyl-tRNA hydrolase II"/>
    <property type="match status" value="1"/>
</dbReference>
<reference key="1">
    <citation type="journal article" date="2000" name="Proc. Natl. Acad. Sci. U.S.A.">
        <title>Genome sequence of Halobacterium species NRC-1.</title>
        <authorList>
            <person name="Ng W.V."/>
            <person name="Kennedy S.P."/>
            <person name="Mahairas G.G."/>
            <person name="Berquist B."/>
            <person name="Pan M."/>
            <person name="Shukla H.D."/>
            <person name="Lasky S.R."/>
            <person name="Baliga N.S."/>
            <person name="Thorsson V."/>
            <person name="Sbrogna J."/>
            <person name="Swartzell S."/>
            <person name="Weir D."/>
            <person name="Hall J."/>
            <person name="Dahl T.A."/>
            <person name="Welti R."/>
            <person name="Goo Y.A."/>
            <person name="Leithauser B."/>
            <person name="Keller K."/>
            <person name="Cruz R."/>
            <person name="Danson M.J."/>
            <person name="Hough D.W."/>
            <person name="Maddocks D.G."/>
            <person name="Jablonski P.E."/>
            <person name="Krebs M.P."/>
            <person name="Angevine C.M."/>
            <person name="Dale H."/>
            <person name="Isenbarger T.A."/>
            <person name="Peck R.F."/>
            <person name="Pohlschroder M."/>
            <person name="Spudich J.L."/>
            <person name="Jung K.-H."/>
            <person name="Alam M."/>
            <person name="Freitas T."/>
            <person name="Hou S."/>
            <person name="Daniels C.J."/>
            <person name="Dennis P.P."/>
            <person name="Omer A.D."/>
            <person name="Ebhardt H."/>
            <person name="Lowe T.M."/>
            <person name="Liang P."/>
            <person name="Riley M."/>
            <person name="Hood L."/>
            <person name="DasSarma S."/>
        </authorList>
    </citation>
    <scope>NUCLEOTIDE SEQUENCE [LARGE SCALE GENOMIC DNA]</scope>
    <source>
        <strain>ATCC 700922 / JCM 11081 / NRC-1</strain>
    </source>
</reference>
<accession>P61414</accession>
<name>PTH_HALSA</name>
<keyword id="KW-0963">Cytoplasm</keyword>
<keyword id="KW-0378">Hydrolase</keyword>
<keyword id="KW-1185">Reference proteome</keyword>
<sequence length="112" mass="12011">MKQVIAARTDIGMGQGKLAAQVAHASLNAYEYTDDRAVRRWKDEGQTKVVVKVGSERELYERSEEAKRAGLPTGLISDAGRTQLEPGTPTALAIGPAPDADVDQITGDLSLF</sequence>
<evidence type="ECO:0000250" key="1"/>
<evidence type="ECO:0000256" key="2">
    <source>
        <dbReference type="SAM" id="MobiDB-lite"/>
    </source>
</evidence>
<evidence type="ECO:0000305" key="3"/>
<organism>
    <name type="scientific">Halobacterium salinarum (strain ATCC 700922 / JCM 11081 / NRC-1)</name>
    <name type="common">Halobacterium halobium</name>
    <dbReference type="NCBI Taxonomy" id="64091"/>
    <lineage>
        <taxon>Archaea</taxon>
        <taxon>Methanobacteriati</taxon>
        <taxon>Methanobacteriota</taxon>
        <taxon>Stenosarchaea group</taxon>
        <taxon>Halobacteria</taxon>
        <taxon>Halobacteriales</taxon>
        <taxon>Halobacteriaceae</taxon>
        <taxon>Halobacterium</taxon>
        <taxon>Halobacterium salinarum NRC-34001</taxon>
    </lineage>
</organism>
<proteinExistence type="inferred from homology"/>
<feature type="chain" id="PRO_0000120290" description="Peptidyl-tRNA hydrolase">
    <location>
        <begin position="1"/>
        <end position="112"/>
    </location>
</feature>
<feature type="region of interest" description="Disordered" evidence="2">
    <location>
        <begin position="64"/>
        <end position="99"/>
    </location>
</feature>
<gene>
    <name type="primary">pth</name>
    <name type="ordered locus">VNG_0243.1</name>
</gene>